<protein>
    <recommendedName>
        <fullName evidence="1">Proline--tRNA ligase</fullName>
        <ecNumber evidence="1">6.1.1.15</ecNumber>
    </recommendedName>
    <alternativeName>
        <fullName evidence="1">Prolyl-tRNA synthetase</fullName>
        <shortName evidence="1">ProRS</shortName>
    </alternativeName>
</protein>
<gene>
    <name evidence="1" type="primary">proS</name>
    <name type="ordered locus">CT1491</name>
</gene>
<feature type="chain" id="PRO_0000249127" description="Proline--tRNA ligase">
    <location>
        <begin position="1"/>
        <end position="481"/>
    </location>
</feature>
<comment type="function">
    <text evidence="1">Catalyzes the attachment of proline to tRNA(Pro) in a two-step reaction: proline is first activated by ATP to form Pro-AMP and then transferred to the acceptor end of tRNA(Pro).</text>
</comment>
<comment type="catalytic activity">
    <reaction evidence="1">
        <text>tRNA(Pro) + L-proline + ATP = L-prolyl-tRNA(Pro) + AMP + diphosphate</text>
        <dbReference type="Rhea" id="RHEA:14305"/>
        <dbReference type="Rhea" id="RHEA-COMP:9700"/>
        <dbReference type="Rhea" id="RHEA-COMP:9702"/>
        <dbReference type="ChEBI" id="CHEBI:30616"/>
        <dbReference type="ChEBI" id="CHEBI:33019"/>
        <dbReference type="ChEBI" id="CHEBI:60039"/>
        <dbReference type="ChEBI" id="CHEBI:78442"/>
        <dbReference type="ChEBI" id="CHEBI:78532"/>
        <dbReference type="ChEBI" id="CHEBI:456215"/>
        <dbReference type="EC" id="6.1.1.15"/>
    </reaction>
</comment>
<comment type="subunit">
    <text evidence="1">Homodimer.</text>
</comment>
<comment type="subcellular location">
    <subcellularLocation>
        <location evidence="1">Cytoplasm</location>
    </subcellularLocation>
</comment>
<comment type="domain">
    <text evidence="1">Consists of three domains: the N-terminal catalytic domain, the anticodon-binding domain and the C-terminal extension.</text>
</comment>
<comment type="similarity">
    <text evidence="1">Belongs to the class-II aminoacyl-tRNA synthetase family. ProS type 3 subfamily.</text>
</comment>
<dbReference type="EC" id="6.1.1.15" evidence="1"/>
<dbReference type="EMBL" id="AE006470">
    <property type="protein sequence ID" value="AAM72718.1"/>
    <property type="molecule type" value="Genomic_DNA"/>
</dbReference>
<dbReference type="RefSeq" id="NP_662376.1">
    <property type="nucleotide sequence ID" value="NC_002932.3"/>
</dbReference>
<dbReference type="RefSeq" id="WP_010933157.1">
    <property type="nucleotide sequence ID" value="NC_002932.3"/>
</dbReference>
<dbReference type="SMR" id="Q8KCD1"/>
<dbReference type="STRING" id="194439.CT1491"/>
<dbReference type="EnsemblBacteria" id="AAM72718">
    <property type="protein sequence ID" value="AAM72718"/>
    <property type="gene ID" value="CT1491"/>
</dbReference>
<dbReference type="KEGG" id="cte:CT1491"/>
<dbReference type="PATRIC" id="fig|194439.7.peg.1352"/>
<dbReference type="eggNOG" id="COG0442">
    <property type="taxonomic scope" value="Bacteria"/>
</dbReference>
<dbReference type="HOGENOM" id="CLU_001882_4_2_10"/>
<dbReference type="OrthoDB" id="9809052at2"/>
<dbReference type="Proteomes" id="UP000001007">
    <property type="component" value="Chromosome"/>
</dbReference>
<dbReference type="GO" id="GO:0017101">
    <property type="term" value="C:aminoacyl-tRNA synthetase multienzyme complex"/>
    <property type="evidence" value="ECO:0007669"/>
    <property type="project" value="TreeGrafter"/>
</dbReference>
<dbReference type="GO" id="GO:0005737">
    <property type="term" value="C:cytoplasm"/>
    <property type="evidence" value="ECO:0007669"/>
    <property type="project" value="UniProtKB-SubCell"/>
</dbReference>
<dbReference type="GO" id="GO:0005524">
    <property type="term" value="F:ATP binding"/>
    <property type="evidence" value="ECO:0007669"/>
    <property type="project" value="UniProtKB-UniRule"/>
</dbReference>
<dbReference type="GO" id="GO:0004827">
    <property type="term" value="F:proline-tRNA ligase activity"/>
    <property type="evidence" value="ECO:0007669"/>
    <property type="project" value="UniProtKB-UniRule"/>
</dbReference>
<dbReference type="GO" id="GO:0006433">
    <property type="term" value="P:prolyl-tRNA aminoacylation"/>
    <property type="evidence" value="ECO:0007669"/>
    <property type="project" value="UniProtKB-UniRule"/>
</dbReference>
<dbReference type="CDD" id="cd00862">
    <property type="entry name" value="ProRS_anticodon_zinc"/>
    <property type="match status" value="1"/>
</dbReference>
<dbReference type="CDD" id="cd00778">
    <property type="entry name" value="ProRS_core_arch_euk"/>
    <property type="match status" value="1"/>
</dbReference>
<dbReference type="FunFam" id="3.30.930.10:FF:000023">
    <property type="entry name" value="Proline--tRNA ligase"/>
    <property type="match status" value="1"/>
</dbReference>
<dbReference type="Gene3D" id="3.40.50.800">
    <property type="entry name" value="Anticodon-binding domain"/>
    <property type="match status" value="1"/>
</dbReference>
<dbReference type="Gene3D" id="3.30.930.10">
    <property type="entry name" value="Bira Bifunctional Protein, Domain 2"/>
    <property type="match status" value="1"/>
</dbReference>
<dbReference type="Gene3D" id="3.30.110.30">
    <property type="entry name" value="C-terminal domain of ProRS"/>
    <property type="match status" value="1"/>
</dbReference>
<dbReference type="HAMAP" id="MF_01571">
    <property type="entry name" value="Pro_tRNA_synth_type3"/>
    <property type="match status" value="1"/>
</dbReference>
<dbReference type="InterPro" id="IPR002314">
    <property type="entry name" value="aa-tRNA-synt_IIb"/>
</dbReference>
<dbReference type="InterPro" id="IPR006195">
    <property type="entry name" value="aa-tRNA-synth_II"/>
</dbReference>
<dbReference type="InterPro" id="IPR045864">
    <property type="entry name" value="aa-tRNA-synth_II/BPL/LPL"/>
</dbReference>
<dbReference type="InterPro" id="IPR004154">
    <property type="entry name" value="Anticodon-bd"/>
</dbReference>
<dbReference type="InterPro" id="IPR036621">
    <property type="entry name" value="Anticodon-bd_dom_sf"/>
</dbReference>
<dbReference type="InterPro" id="IPR002316">
    <property type="entry name" value="Pro-tRNA-ligase_IIa"/>
</dbReference>
<dbReference type="InterPro" id="IPR004499">
    <property type="entry name" value="Pro-tRNA-ligase_IIa_arc-type"/>
</dbReference>
<dbReference type="InterPro" id="IPR016061">
    <property type="entry name" value="Pro-tRNA_ligase_II_C"/>
</dbReference>
<dbReference type="InterPro" id="IPR017449">
    <property type="entry name" value="Pro-tRNA_synth_II"/>
</dbReference>
<dbReference type="InterPro" id="IPR033721">
    <property type="entry name" value="ProRS_core_arch_euk"/>
</dbReference>
<dbReference type="NCBIfam" id="TIGR00408">
    <property type="entry name" value="proS_fam_I"/>
    <property type="match status" value="1"/>
</dbReference>
<dbReference type="PANTHER" id="PTHR43382:SF2">
    <property type="entry name" value="BIFUNCTIONAL GLUTAMATE_PROLINE--TRNA LIGASE"/>
    <property type="match status" value="1"/>
</dbReference>
<dbReference type="PANTHER" id="PTHR43382">
    <property type="entry name" value="PROLYL-TRNA SYNTHETASE"/>
    <property type="match status" value="1"/>
</dbReference>
<dbReference type="Pfam" id="PF03129">
    <property type="entry name" value="HGTP_anticodon"/>
    <property type="match status" value="1"/>
</dbReference>
<dbReference type="Pfam" id="PF09180">
    <property type="entry name" value="ProRS-C_1"/>
    <property type="match status" value="1"/>
</dbReference>
<dbReference type="Pfam" id="PF00587">
    <property type="entry name" value="tRNA-synt_2b"/>
    <property type="match status" value="1"/>
</dbReference>
<dbReference type="PRINTS" id="PR01046">
    <property type="entry name" value="TRNASYNTHPRO"/>
</dbReference>
<dbReference type="SMART" id="SM00946">
    <property type="entry name" value="ProRS-C_1"/>
    <property type="match status" value="1"/>
</dbReference>
<dbReference type="SUPFAM" id="SSF64586">
    <property type="entry name" value="C-terminal domain of ProRS"/>
    <property type="match status" value="1"/>
</dbReference>
<dbReference type="SUPFAM" id="SSF52954">
    <property type="entry name" value="Class II aaRS ABD-related"/>
    <property type="match status" value="1"/>
</dbReference>
<dbReference type="SUPFAM" id="SSF55681">
    <property type="entry name" value="Class II aaRS and biotin synthetases"/>
    <property type="match status" value="1"/>
</dbReference>
<dbReference type="PROSITE" id="PS50862">
    <property type="entry name" value="AA_TRNA_LIGASE_II"/>
    <property type="match status" value="1"/>
</dbReference>
<evidence type="ECO:0000255" key="1">
    <source>
        <dbReference type="HAMAP-Rule" id="MF_01571"/>
    </source>
</evidence>
<name>SYP_CHLTE</name>
<proteinExistence type="inferred from homology"/>
<keyword id="KW-0030">Aminoacyl-tRNA synthetase</keyword>
<keyword id="KW-0067">ATP-binding</keyword>
<keyword id="KW-0963">Cytoplasm</keyword>
<keyword id="KW-0436">Ligase</keyword>
<keyword id="KW-0547">Nucleotide-binding</keyword>
<keyword id="KW-0648">Protein biosynthesis</keyword>
<keyword id="KW-1185">Reference proteome</keyword>
<sequence>MADKITSRQEDYSQWYIDLVRSAKLADYSDVRGCMVIRPNGYAIWEKMQAALDGMFKQTGHVNAYFPMFIPESFIAKEAEHIEGFAPECAVVTHGGGEELAEKLYVRPTSETIIWSSYKKWIQSYRDLPILINQWANVVRWEMRTRLFLRTTEFLWQEGHTAHATPEEAQEEVIRMINIYRTFAEEYMAMPVIVGKKSESEKFAGADATYCIEAMMQDGKALQAGTSHNLGQNFAKAFDCQFQTKDGVLDYVWATSWGVSTRLIGALIMAHSDDKGLVLPPKLASRQVVIIPILKGNKDEVRARARFIAKTLNRHGIPTFVDDSENNSPGWKFAEYELQGIPVRIELGPRDLEQGKCIVARRDTFEKTELLLDDELTINIEEILNNIQQNLYDRALQFRLDNTVEATTWEEFKASVEKGFVIAHWDGTHETEALIKEETKATIRVIPTDEEYRQQYNMDEPGTCIRSGKPAAQKVVFAKAY</sequence>
<reference key="1">
    <citation type="journal article" date="2002" name="Proc. Natl. Acad. Sci. U.S.A.">
        <title>The complete genome sequence of Chlorobium tepidum TLS, a photosynthetic, anaerobic, green-sulfur bacterium.</title>
        <authorList>
            <person name="Eisen J.A."/>
            <person name="Nelson K.E."/>
            <person name="Paulsen I.T."/>
            <person name="Heidelberg J.F."/>
            <person name="Wu M."/>
            <person name="Dodson R.J."/>
            <person name="DeBoy R.T."/>
            <person name="Gwinn M.L."/>
            <person name="Nelson W.C."/>
            <person name="Haft D.H."/>
            <person name="Hickey E.K."/>
            <person name="Peterson J.D."/>
            <person name="Durkin A.S."/>
            <person name="Kolonay J.F."/>
            <person name="Yang F."/>
            <person name="Holt I.E."/>
            <person name="Umayam L.A."/>
            <person name="Mason T.M."/>
            <person name="Brenner M."/>
            <person name="Shea T.P."/>
            <person name="Parksey D.S."/>
            <person name="Nierman W.C."/>
            <person name="Feldblyum T.V."/>
            <person name="Hansen C.L."/>
            <person name="Craven M.B."/>
            <person name="Radune D."/>
            <person name="Vamathevan J.J."/>
            <person name="Khouri H.M."/>
            <person name="White O."/>
            <person name="Gruber T.M."/>
            <person name="Ketchum K.A."/>
            <person name="Venter J.C."/>
            <person name="Tettelin H."/>
            <person name="Bryant D.A."/>
            <person name="Fraser C.M."/>
        </authorList>
    </citation>
    <scope>NUCLEOTIDE SEQUENCE [LARGE SCALE GENOMIC DNA]</scope>
    <source>
        <strain>ATCC 49652 / DSM 12025 / NBRC 103806 / TLS</strain>
    </source>
</reference>
<organism>
    <name type="scientific">Chlorobaculum tepidum (strain ATCC 49652 / DSM 12025 / NBRC 103806 / TLS)</name>
    <name type="common">Chlorobium tepidum</name>
    <dbReference type="NCBI Taxonomy" id="194439"/>
    <lineage>
        <taxon>Bacteria</taxon>
        <taxon>Pseudomonadati</taxon>
        <taxon>Chlorobiota</taxon>
        <taxon>Chlorobiia</taxon>
        <taxon>Chlorobiales</taxon>
        <taxon>Chlorobiaceae</taxon>
        <taxon>Chlorobaculum</taxon>
    </lineage>
</organism>
<accession>Q8KCD1</accession>